<evidence type="ECO:0000255" key="1">
    <source>
        <dbReference type="HAMAP-Rule" id="MF_00487"/>
    </source>
</evidence>
<dbReference type="EC" id="1.1.1.37" evidence="1"/>
<dbReference type="EMBL" id="AF322647">
    <property type="protein sequence ID" value="AAG41996.1"/>
    <property type="molecule type" value="Genomic_DNA"/>
</dbReference>
<dbReference type="EMBL" id="AL591688">
    <property type="protein sequence ID" value="CAC47635.1"/>
    <property type="molecule type" value="Genomic_DNA"/>
</dbReference>
<dbReference type="RefSeq" id="NP_387162.1">
    <property type="nucleotide sequence ID" value="NC_003047.1"/>
</dbReference>
<dbReference type="RefSeq" id="WP_003530257.1">
    <property type="nucleotide sequence ID" value="NC_003047.1"/>
</dbReference>
<dbReference type="SMR" id="Q9EYJ6"/>
<dbReference type="EnsemblBacteria" id="CAC47635">
    <property type="protein sequence ID" value="CAC47635"/>
    <property type="gene ID" value="SMc02479"/>
</dbReference>
<dbReference type="GeneID" id="89574076"/>
<dbReference type="KEGG" id="sme:SMc02479"/>
<dbReference type="PATRIC" id="fig|266834.11.peg.4590"/>
<dbReference type="eggNOG" id="COG0039">
    <property type="taxonomic scope" value="Bacteria"/>
</dbReference>
<dbReference type="HOGENOM" id="CLU_045401_2_1_5"/>
<dbReference type="OrthoDB" id="9802969at2"/>
<dbReference type="Proteomes" id="UP000001976">
    <property type="component" value="Chromosome"/>
</dbReference>
<dbReference type="GO" id="GO:0004459">
    <property type="term" value="F:L-lactate dehydrogenase activity"/>
    <property type="evidence" value="ECO:0007669"/>
    <property type="project" value="TreeGrafter"/>
</dbReference>
<dbReference type="GO" id="GO:0030060">
    <property type="term" value="F:L-malate dehydrogenase (NAD+) activity"/>
    <property type="evidence" value="ECO:0007669"/>
    <property type="project" value="UniProtKB-UniRule"/>
</dbReference>
<dbReference type="GO" id="GO:0006089">
    <property type="term" value="P:lactate metabolic process"/>
    <property type="evidence" value="ECO:0007669"/>
    <property type="project" value="TreeGrafter"/>
</dbReference>
<dbReference type="GO" id="GO:0006099">
    <property type="term" value="P:tricarboxylic acid cycle"/>
    <property type="evidence" value="ECO:0007669"/>
    <property type="project" value="UniProtKB-UniRule"/>
</dbReference>
<dbReference type="CDD" id="cd01339">
    <property type="entry name" value="LDH-like_MDH"/>
    <property type="match status" value="1"/>
</dbReference>
<dbReference type="FunFam" id="3.40.50.720:FF:000018">
    <property type="entry name" value="Malate dehydrogenase"/>
    <property type="match status" value="1"/>
</dbReference>
<dbReference type="FunFam" id="3.90.110.10:FF:000004">
    <property type="entry name" value="Malate dehydrogenase"/>
    <property type="match status" value="1"/>
</dbReference>
<dbReference type="Gene3D" id="3.90.110.10">
    <property type="entry name" value="Lactate dehydrogenase/glycoside hydrolase, family 4, C-terminal"/>
    <property type="match status" value="1"/>
</dbReference>
<dbReference type="Gene3D" id="3.40.50.720">
    <property type="entry name" value="NAD(P)-binding Rossmann-like Domain"/>
    <property type="match status" value="1"/>
</dbReference>
<dbReference type="HAMAP" id="MF_00487">
    <property type="entry name" value="Malate_dehydrog_3"/>
    <property type="match status" value="1"/>
</dbReference>
<dbReference type="InterPro" id="IPR001557">
    <property type="entry name" value="L-lactate/malate_DH"/>
</dbReference>
<dbReference type="InterPro" id="IPR022383">
    <property type="entry name" value="Lactate/malate_DH_C"/>
</dbReference>
<dbReference type="InterPro" id="IPR001236">
    <property type="entry name" value="Lactate/malate_DH_N"/>
</dbReference>
<dbReference type="InterPro" id="IPR015955">
    <property type="entry name" value="Lactate_DH/Glyco_Ohase_4_C"/>
</dbReference>
<dbReference type="InterPro" id="IPR011275">
    <property type="entry name" value="Malate_DH_type3"/>
</dbReference>
<dbReference type="InterPro" id="IPR036291">
    <property type="entry name" value="NAD(P)-bd_dom_sf"/>
</dbReference>
<dbReference type="NCBIfam" id="TIGR01763">
    <property type="entry name" value="MalateDH_bact"/>
    <property type="match status" value="1"/>
</dbReference>
<dbReference type="NCBIfam" id="NF004863">
    <property type="entry name" value="PRK06223.1"/>
    <property type="match status" value="1"/>
</dbReference>
<dbReference type="PANTHER" id="PTHR43128">
    <property type="entry name" value="L-2-HYDROXYCARBOXYLATE DEHYDROGENASE (NAD(P)(+))"/>
    <property type="match status" value="1"/>
</dbReference>
<dbReference type="PANTHER" id="PTHR43128:SF16">
    <property type="entry name" value="L-LACTATE DEHYDROGENASE"/>
    <property type="match status" value="1"/>
</dbReference>
<dbReference type="Pfam" id="PF02866">
    <property type="entry name" value="Ldh_1_C"/>
    <property type="match status" value="1"/>
</dbReference>
<dbReference type="Pfam" id="PF00056">
    <property type="entry name" value="Ldh_1_N"/>
    <property type="match status" value="1"/>
</dbReference>
<dbReference type="PIRSF" id="PIRSF000102">
    <property type="entry name" value="Lac_mal_DH"/>
    <property type="match status" value="1"/>
</dbReference>
<dbReference type="PRINTS" id="PR00086">
    <property type="entry name" value="LLDHDRGNASE"/>
</dbReference>
<dbReference type="SUPFAM" id="SSF56327">
    <property type="entry name" value="LDH C-terminal domain-like"/>
    <property type="match status" value="1"/>
</dbReference>
<dbReference type="SUPFAM" id="SSF51735">
    <property type="entry name" value="NAD(P)-binding Rossmann-fold domains"/>
    <property type="match status" value="1"/>
</dbReference>
<feature type="chain" id="PRO_0000113463" description="Malate dehydrogenase">
    <location>
        <begin position="1"/>
        <end position="320"/>
    </location>
</feature>
<feature type="active site" description="Proton acceptor" evidence="1">
    <location>
        <position position="176"/>
    </location>
</feature>
<feature type="binding site" evidence="1">
    <location>
        <begin position="10"/>
        <end position="15"/>
    </location>
    <ligand>
        <name>NAD(+)</name>
        <dbReference type="ChEBI" id="CHEBI:57540"/>
    </ligand>
</feature>
<feature type="binding site" evidence="1">
    <location>
        <position position="34"/>
    </location>
    <ligand>
        <name>NAD(+)</name>
        <dbReference type="ChEBI" id="CHEBI:57540"/>
    </ligand>
</feature>
<feature type="binding site" evidence="1">
    <location>
        <position position="83"/>
    </location>
    <ligand>
        <name>substrate</name>
    </ligand>
</feature>
<feature type="binding site" evidence="1">
    <location>
        <position position="89"/>
    </location>
    <ligand>
        <name>substrate</name>
    </ligand>
</feature>
<feature type="binding site" evidence="1">
    <location>
        <position position="96"/>
    </location>
    <ligand>
        <name>NAD(+)</name>
        <dbReference type="ChEBI" id="CHEBI:57540"/>
    </ligand>
</feature>
<feature type="binding site" evidence="1">
    <location>
        <begin position="119"/>
        <end position="121"/>
    </location>
    <ligand>
        <name>NAD(+)</name>
        <dbReference type="ChEBI" id="CHEBI:57540"/>
    </ligand>
</feature>
<feature type="binding site" evidence="1">
    <location>
        <position position="121"/>
    </location>
    <ligand>
        <name>substrate</name>
    </ligand>
</feature>
<feature type="binding site" evidence="1">
    <location>
        <position position="152"/>
    </location>
    <ligand>
        <name>substrate</name>
    </ligand>
</feature>
<name>MDH_RHIME</name>
<proteinExistence type="inferred from homology"/>
<comment type="function">
    <text evidence="1">Catalyzes the reversible oxidation of malate to oxaloacetate.</text>
</comment>
<comment type="catalytic activity">
    <reaction evidence="1">
        <text>(S)-malate + NAD(+) = oxaloacetate + NADH + H(+)</text>
        <dbReference type="Rhea" id="RHEA:21432"/>
        <dbReference type="ChEBI" id="CHEBI:15378"/>
        <dbReference type="ChEBI" id="CHEBI:15589"/>
        <dbReference type="ChEBI" id="CHEBI:16452"/>
        <dbReference type="ChEBI" id="CHEBI:57540"/>
        <dbReference type="ChEBI" id="CHEBI:57945"/>
        <dbReference type="EC" id="1.1.1.37"/>
    </reaction>
</comment>
<comment type="similarity">
    <text evidence="1">Belongs to the LDH/MDH superfamily. MDH type 3 family.</text>
</comment>
<sequence length="320" mass="33611">MARNKIALIGSGMIGGTLAHLAGLKELGDIVLFDIADGIPQGKGLDIAQSSPVEGFDASLTGASDYSAIEGADVCIVTAGVPRKPGMSRDDLLGINLKVMEQVGAGIKKYAPNAFVICITNPLDAMVWALQKFSGLPKNKVVGMAGVLDSSRFRLFLAEEFNVSVKDITAFVLGGHGDTMVPLARYSTVAGIPLPDLIQMGWTTKEKLDQIIQRTRDGGAEIVGLLKTGSAYYAPAASAIEMAEAYLKDKKRVLPCAAHLSGQYGVKDMYVGVPTVIGAGGIERIIEIDLNKGEKEAFDKSVAAVAGLCEACINIAPSLK</sequence>
<reference key="1">
    <citation type="submission" date="2000-11" db="EMBL/GenBank/DDBJ databases">
        <title>Isolation of a malate dehydrogenase mutant and genes encoding a putative TCA cycle operon of Sinorhizobium meliloti.</title>
        <authorList>
            <person name="Dymov S.I."/>
            <person name="Meek D.J."/>
            <person name="Driscoll B.T."/>
        </authorList>
    </citation>
    <scope>NUCLEOTIDE SEQUENCE [GENOMIC DNA]</scope>
</reference>
<reference key="2">
    <citation type="journal article" date="2001" name="Proc. Natl. Acad. Sci. U.S.A.">
        <title>Analysis of the chromosome sequence of the legume symbiont Sinorhizobium meliloti strain 1021.</title>
        <authorList>
            <person name="Capela D."/>
            <person name="Barloy-Hubler F."/>
            <person name="Gouzy J."/>
            <person name="Bothe G."/>
            <person name="Ampe F."/>
            <person name="Batut J."/>
            <person name="Boistard P."/>
            <person name="Becker A."/>
            <person name="Boutry M."/>
            <person name="Cadieu E."/>
            <person name="Dreano S."/>
            <person name="Gloux S."/>
            <person name="Godrie T."/>
            <person name="Goffeau A."/>
            <person name="Kahn D."/>
            <person name="Kiss E."/>
            <person name="Lelaure V."/>
            <person name="Masuy D."/>
            <person name="Pohl T."/>
            <person name="Portetelle D."/>
            <person name="Puehler A."/>
            <person name="Purnelle B."/>
            <person name="Ramsperger U."/>
            <person name="Renard C."/>
            <person name="Thebault P."/>
            <person name="Vandenbol M."/>
            <person name="Weidner S."/>
            <person name="Galibert F."/>
        </authorList>
    </citation>
    <scope>NUCLEOTIDE SEQUENCE [LARGE SCALE GENOMIC DNA]</scope>
    <source>
        <strain>1021</strain>
    </source>
</reference>
<reference key="3">
    <citation type="journal article" date="2001" name="Science">
        <title>The composite genome of the legume symbiont Sinorhizobium meliloti.</title>
        <authorList>
            <person name="Galibert F."/>
            <person name="Finan T.M."/>
            <person name="Long S.R."/>
            <person name="Puehler A."/>
            <person name="Abola P."/>
            <person name="Ampe F."/>
            <person name="Barloy-Hubler F."/>
            <person name="Barnett M.J."/>
            <person name="Becker A."/>
            <person name="Boistard P."/>
            <person name="Bothe G."/>
            <person name="Boutry M."/>
            <person name="Bowser L."/>
            <person name="Buhrmester J."/>
            <person name="Cadieu E."/>
            <person name="Capela D."/>
            <person name="Chain P."/>
            <person name="Cowie A."/>
            <person name="Davis R.W."/>
            <person name="Dreano S."/>
            <person name="Federspiel N.A."/>
            <person name="Fisher R.F."/>
            <person name="Gloux S."/>
            <person name="Godrie T."/>
            <person name="Goffeau A."/>
            <person name="Golding B."/>
            <person name="Gouzy J."/>
            <person name="Gurjal M."/>
            <person name="Hernandez-Lucas I."/>
            <person name="Hong A."/>
            <person name="Huizar L."/>
            <person name="Hyman R.W."/>
            <person name="Jones T."/>
            <person name="Kahn D."/>
            <person name="Kahn M.L."/>
            <person name="Kalman S."/>
            <person name="Keating D.H."/>
            <person name="Kiss E."/>
            <person name="Komp C."/>
            <person name="Lelaure V."/>
            <person name="Masuy D."/>
            <person name="Palm C."/>
            <person name="Peck M.C."/>
            <person name="Pohl T.M."/>
            <person name="Portetelle D."/>
            <person name="Purnelle B."/>
            <person name="Ramsperger U."/>
            <person name="Surzycki R."/>
            <person name="Thebault P."/>
            <person name="Vandenbol M."/>
            <person name="Vorhoelter F.J."/>
            <person name="Weidner S."/>
            <person name="Wells D.H."/>
            <person name="Wong K."/>
            <person name="Yeh K.-C."/>
            <person name="Batut J."/>
        </authorList>
    </citation>
    <scope>NUCLEOTIDE SEQUENCE [LARGE SCALE GENOMIC DNA]</scope>
    <source>
        <strain>1021</strain>
    </source>
</reference>
<keyword id="KW-0520">NAD</keyword>
<keyword id="KW-0560">Oxidoreductase</keyword>
<keyword id="KW-1185">Reference proteome</keyword>
<keyword id="KW-0816">Tricarboxylic acid cycle</keyword>
<organism>
    <name type="scientific">Rhizobium meliloti (strain 1021)</name>
    <name type="common">Ensifer meliloti</name>
    <name type="synonym">Sinorhizobium meliloti</name>
    <dbReference type="NCBI Taxonomy" id="266834"/>
    <lineage>
        <taxon>Bacteria</taxon>
        <taxon>Pseudomonadati</taxon>
        <taxon>Pseudomonadota</taxon>
        <taxon>Alphaproteobacteria</taxon>
        <taxon>Hyphomicrobiales</taxon>
        <taxon>Rhizobiaceae</taxon>
        <taxon>Sinorhizobium/Ensifer group</taxon>
        <taxon>Sinorhizobium</taxon>
    </lineage>
</organism>
<gene>
    <name evidence="1" type="primary">mdh</name>
    <name type="ordered locus">R03056</name>
    <name type="ORF">SMc02479</name>
</gene>
<protein>
    <recommendedName>
        <fullName evidence="1">Malate dehydrogenase</fullName>
        <ecNumber evidence="1">1.1.1.37</ecNumber>
    </recommendedName>
</protein>
<accession>Q9EYJ6</accession>